<comment type="function">
    <text evidence="1">Specifically methylates the adenine in position 1618 of 23S rRNA.</text>
</comment>
<comment type="catalytic activity">
    <reaction evidence="1">
        <text>adenosine(1618) in 23S rRNA + S-adenosyl-L-methionine = N(6)-methyladenosine(1618) in 23S rRNA + S-adenosyl-L-homocysteine + H(+)</text>
        <dbReference type="Rhea" id="RHEA:16497"/>
        <dbReference type="Rhea" id="RHEA-COMP:10229"/>
        <dbReference type="Rhea" id="RHEA-COMP:10231"/>
        <dbReference type="ChEBI" id="CHEBI:15378"/>
        <dbReference type="ChEBI" id="CHEBI:57856"/>
        <dbReference type="ChEBI" id="CHEBI:59789"/>
        <dbReference type="ChEBI" id="CHEBI:74411"/>
        <dbReference type="ChEBI" id="CHEBI:74449"/>
        <dbReference type="EC" id="2.1.1.181"/>
    </reaction>
</comment>
<comment type="subcellular location">
    <subcellularLocation>
        <location evidence="1">Cytoplasm</location>
    </subcellularLocation>
</comment>
<comment type="similarity">
    <text evidence="1">Belongs to the methyltransferase superfamily. METTL16/RlmF family.</text>
</comment>
<comment type="sequence caution" evidence="2">
    <conflict type="erroneous initiation">
        <sequence resource="EMBL-CDS" id="ABV05218"/>
    </conflict>
</comment>
<evidence type="ECO:0000255" key="1">
    <source>
        <dbReference type="HAMAP-Rule" id="MF_01848"/>
    </source>
</evidence>
<evidence type="ECO:0000305" key="2"/>
<proteinExistence type="inferred from homology"/>
<sequence length="308" mass="34226">MSAQKPGLHPRNRHHSRYDLATLCQVNPELRQFLTLTPAGEQSVDFANPLAVKALNKALLAHFYAVANWDIPDGFLCPPVPGRADYIHHLADLLAEASGTIPANASILDIGVGANCIYPLIGVHEYGWRFTGSETSSQALSSAQAIISSNPGLNRAIRLRRQKESGAIFNGIIHKNEQYDATLCNPPFHDSAAAARAGSERKRRNLGLNKDDALNFGGQQQELWCEGGEVTFIKKMIEESKGFAKQVMWFTSLVSRGENLPPLYRALTDVGAVKVVKKEMAQGQKQSRFIAWTFMNDEQRRRFVNRQR</sequence>
<organism>
    <name type="scientific">Escherichia coli O9:H4 (strain HS)</name>
    <dbReference type="NCBI Taxonomy" id="331112"/>
    <lineage>
        <taxon>Bacteria</taxon>
        <taxon>Pseudomonadati</taxon>
        <taxon>Pseudomonadota</taxon>
        <taxon>Gammaproteobacteria</taxon>
        <taxon>Enterobacterales</taxon>
        <taxon>Enterobacteriaceae</taxon>
        <taxon>Escherichia</taxon>
    </lineage>
</organism>
<dbReference type="EC" id="2.1.1.181" evidence="1"/>
<dbReference type="EMBL" id="CP000802">
    <property type="protein sequence ID" value="ABV05218.1"/>
    <property type="status" value="ALT_INIT"/>
    <property type="molecule type" value="Genomic_DNA"/>
</dbReference>
<dbReference type="RefSeq" id="WP_001295299.1">
    <property type="nucleotide sequence ID" value="NC_009800.1"/>
</dbReference>
<dbReference type="SMR" id="A7ZY64"/>
<dbReference type="KEGG" id="ecx:EcHS_A0862"/>
<dbReference type="HOGENOM" id="CLU_027534_3_0_6"/>
<dbReference type="GO" id="GO:0005737">
    <property type="term" value="C:cytoplasm"/>
    <property type="evidence" value="ECO:0007669"/>
    <property type="project" value="UniProtKB-SubCell"/>
</dbReference>
<dbReference type="GO" id="GO:0052907">
    <property type="term" value="F:23S rRNA (adenine(1618)-N(6))-methyltransferase activity"/>
    <property type="evidence" value="ECO:0007669"/>
    <property type="project" value="UniProtKB-EC"/>
</dbReference>
<dbReference type="GO" id="GO:0070475">
    <property type="term" value="P:rRNA base methylation"/>
    <property type="evidence" value="ECO:0007669"/>
    <property type="project" value="TreeGrafter"/>
</dbReference>
<dbReference type="FunFam" id="3.40.50.150:FF:000045">
    <property type="entry name" value="Ribosomal RNA large subunit methyltransferase F"/>
    <property type="match status" value="1"/>
</dbReference>
<dbReference type="Gene3D" id="3.40.50.150">
    <property type="entry name" value="Vaccinia Virus protein VP39"/>
    <property type="match status" value="1"/>
</dbReference>
<dbReference type="HAMAP" id="MF_01848">
    <property type="entry name" value="23SrRNA_methyltr_F"/>
    <property type="match status" value="1"/>
</dbReference>
<dbReference type="InterPro" id="IPR010286">
    <property type="entry name" value="METTL16/RlmF"/>
</dbReference>
<dbReference type="InterPro" id="IPR016909">
    <property type="entry name" value="rRNA_lsu_MeTfrase_F"/>
</dbReference>
<dbReference type="InterPro" id="IPR029063">
    <property type="entry name" value="SAM-dependent_MTases_sf"/>
</dbReference>
<dbReference type="NCBIfam" id="NF008725">
    <property type="entry name" value="PRK11727.1"/>
    <property type="match status" value="1"/>
</dbReference>
<dbReference type="PANTHER" id="PTHR13393:SF0">
    <property type="entry name" value="RNA N6-ADENOSINE-METHYLTRANSFERASE METTL16"/>
    <property type="match status" value="1"/>
</dbReference>
<dbReference type="PANTHER" id="PTHR13393">
    <property type="entry name" value="SAM-DEPENDENT METHYLTRANSFERASE"/>
    <property type="match status" value="1"/>
</dbReference>
<dbReference type="Pfam" id="PF05971">
    <property type="entry name" value="Methyltransf_10"/>
    <property type="match status" value="1"/>
</dbReference>
<dbReference type="PIRSF" id="PIRSF029038">
    <property type="entry name" value="Mtase_YbiN_prd"/>
    <property type="match status" value="1"/>
</dbReference>
<dbReference type="SUPFAM" id="SSF53335">
    <property type="entry name" value="S-adenosyl-L-methionine-dependent methyltransferases"/>
    <property type="match status" value="1"/>
</dbReference>
<keyword id="KW-0963">Cytoplasm</keyword>
<keyword id="KW-0489">Methyltransferase</keyword>
<keyword id="KW-0698">rRNA processing</keyword>
<keyword id="KW-0949">S-adenosyl-L-methionine</keyword>
<keyword id="KW-0808">Transferase</keyword>
<name>RLMF_ECOHS</name>
<protein>
    <recommendedName>
        <fullName evidence="1">Ribosomal RNA large subunit methyltransferase F</fullName>
        <ecNumber evidence="1">2.1.1.181</ecNumber>
    </recommendedName>
    <alternativeName>
        <fullName evidence="1">23S rRNA mA1618 methyltransferase</fullName>
    </alternativeName>
    <alternativeName>
        <fullName evidence="1">rRNA adenine N-6-methyltransferase</fullName>
    </alternativeName>
</protein>
<feature type="chain" id="PRO_0000349915" description="Ribosomal RNA large subunit methyltransferase F">
    <location>
        <begin position="1"/>
        <end position="308"/>
    </location>
</feature>
<reference key="1">
    <citation type="journal article" date="2008" name="J. Bacteriol.">
        <title>The pangenome structure of Escherichia coli: comparative genomic analysis of E. coli commensal and pathogenic isolates.</title>
        <authorList>
            <person name="Rasko D.A."/>
            <person name="Rosovitz M.J."/>
            <person name="Myers G.S.A."/>
            <person name="Mongodin E.F."/>
            <person name="Fricke W.F."/>
            <person name="Gajer P."/>
            <person name="Crabtree J."/>
            <person name="Sebaihia M."/>
            <person name="Thomson N.R."/>
            <person name="Chaudhuri R."/>
            <person name="Henderson I.R."/>
            <person name="Sperandio V."/>
            <person name="Ravel J."/>
        </authorList>
    </citation>
    <scope>NUCLEOTIDE SEQUENCE [LARGE SCALE GENOMIC DNA]</scope>
    <source>
        <strain>HS</strain>
    </source>
</reference>
<accession>A7ZY64</accession>
<gene>
    <name evidence="1" type="primary">rlmF</name>
    <name type="ordered locus">EcHS_A0862</name>
</gene>